<dbReference type="EMBL" id="CP000538">
    <property type="protein sequence ID" value="EAQ73271.1"/>
    <property type="molecule type" value="Genomic_DNA"/>
</dbReference>
<dbReference type="RefSeq" id="WP_002868936.1">
    <property type="nucleotide sequence ID" value="NC_008787.1"/>
</dbReference>
<dbReference type="SMR" id="A1VXL9"/>
<dbReference type="KEGG" id="cjj:CJJ81176_0171"/>
<dbReference type="eggNOG" id="COG0532">
    <property type="taxonomic scope" value="Bacteria"/>
</dbReference>
<dbReference type="HOGENOM" id="CLU_006301_4_1_7"/>
<dbReference type="Proteomes" id="UP000000646">
    <property type="component" value="Chromosome"/>
</dbReference>
<dbReference type="GO" id="GO:0005829">
    <property type="term" value="C:cytosol"/>
    <property type="evidence" value="ECO:0007669"/>
    <property type="project" value="TreeGrafter"/>
</dbReference>
<dbReference type="GO" id="GO:0005525">
    <property type="term" value="F:GTP binding"/>
    <property type="evidence" value="ECO:0007669"/>
    <property type="project" value="UniProtKB-KW"/>
</dbReference>
<dbReference type="GO" id="GO:0003924">
    <property type="term" value="F:GTPase activity"/>
    <property type="evidence" value="ECO:0007669"/>
    <property type="project" value="UniProtKB-UniRule"/>
</dbReference>
<dbReference type="GO" id="GO:0003743">
    <property type="term" value="F:translation initiation factor activity"/>
    <property type="evidence" value="ECO:0007669"/>
    <property type="project" value="UniProtKB-UniRule"/>
</dbReference>
<dbReference type="CDD" id="cd01887">
    <property type="entry name" value="IF2_eIF5B"/>
    <property type="match status" value="1"/>
</dbReference>
<dbReference type="CDD" id="cd03702">
    <property type="entry name" value="IF2_mtIF2_II"/>
    <property type="match status" value="1"/>
</dbReference>
<dbReference type="CDD" id="cd03692">
    <property type="entry name" value="mtIF2_IVc"/>
    <property type="match status" value="1"/>
</dbReference>
<dbReference type="FunFam" id="2.40.30.10:FF:000008">
    <property type="entry name" value="Translation initiation factor IF-2"/>
    <property type="match status" value="1"/>
</dbReference>
<dbReference type="FunFam" id="2.40.30.10:FF:000054">
    <property type="entry name" value="Translation initiation factor IF-2"/>
    <property type="match status" value="1"/>
</dbReference>
<dbReference type="FunFam" id="3.40.50.10050:FF:000001">
    <property type="entry name" value="Translation initiation factor IF-2"/>
    <property type="match status" value="1"/>
</dbReference>
<dbReference type="FunFam" id="3.40.50.300:FF:000019">
    <property type="entry name" value="Translation initiation factor IF-2"/>
    <property type="match status" value="1"/>
</dbReference>
<dbReference type="Gene3D" id="1.10.10.2480">
    <property type="match status" value="1"/>
</dbReference>
<dbReference type="Gene3D" id="3.40.50.300">
    <property type="entry name" value="P-loop containing nucleotide triphosphate hydrolases"/>
    <property type="match status" value="1"/>
</dbReference>
<dbReference type="Gene3D" id="2.40.30.10">
    <property type="entry name" value="Translation factors"/>
    <property type="match status" value="2"/>
</dbReference>
<dbReference type="Gene3D" id="3.40.50.10050">
    <property type="entry name" value="Translation initiation factor IF- 2, domain 3"/>
    <property type="match status" value="1"/>
</dbReference>
<dbReference type="HAMAP" id="MF_00100_B">
    <property type="entry name" value="IF_2_B"/>
    <property type="match status" value="1"/>
</dbReference>
<dbReference type="InterPro" id="IPR053905">
    <property type="entry name" value="EF-G-like_DII"/>
</dbReference>
<dbReference type="InterPro" id="IPR004161">
    <property type="entry name" value="EFTu-like_2"/>
</dbReference>
<dbReference type="InterPro" id="IPR044145">
    <property type="entry name" value="IF2_II"/>
</dbReference>
<dbReference type="InterPro" id="IPR006847">
    <property type="entry name" value="IF2_N"/>
</dbReference>
<dbReference type="InterPro" id="IPR027417">
    <property type="entry name" value="P-loop_NTPase"/>
</dbReference>
<dbReference type="InterPro" id="IPR005225">
    <property type="entry name" value="Small_GTP-bd"/>
</dbReference>
<dbReference type="InterPro" id="IPR000795">
    <property type="entry name" value="T_Tr_GTP-bd_dom"/>
</dbReference>
<dbReference type="InterPro" id="IPR000178">
    <property type="entry name" value="TF_IF2_bacterial-like"/>
</dbReference>
<dbReference type="InterPro" id="IPR015760">
    <property type="entry name" value="TIF_IF2"/>
</dbReference>
<dbReference type="InterPro" id="IPR023115">
    <property type="entry name" value="TIF_IF2_dom3"/>
</dbReference>
<dbReference type="InterPro" id="IPR036925">
    <property type="entry name" value="TIF_IF2_dom3_sf"/>
</dbReference>
<dbReference type="InterPro" id="IPR009000">
    <property type="entry name" value="Transl_B-barrel_sf"/>
</dbReference>
<dbReference type="NCBIfam" id="TIGR00487">
    <property type="entry name" value="IF-2"/>
    <property type="match status" value="1"/>
</dbReference>
<dbReference type="NCBIfam" id="TIGR00231">
    <property type="entry name" value="small_GTP"/>
    <property type="match status" value="1"/>
</dbReference>
<dbReference type="PANTHER" id="PTHR43381:SF5">
    <property type="entry name" value="TR-TYPE G DOMAIN-CONTAINING PROTEIN"/>
    <property type="match status" value="1"/>
</dbReference>
<dbReference type="PANTHER" id="PTHR43381">
    <property type="entry name" value="TRANSLATION INITIATION FACTOR IF-2-RELATED"/>
    <property type="match status" value="1"/>
</dbReference>
<dbReference type="Pfam" id="PF22042">
    <property type="entry name" value="EF-G_D2"/>
    <property type="match status" value="1"/>
</dbReference>
<dbReference type="Pfam" id="PF00009">
    <property type="entry name" value="GTP_EFTU"/>
    <property type="match status" value="1"/>
</dbReference>
<dbReference type="Pfam" id="PF03144">
    <property type="entry name" value="GTP_EFTU_D2"/>
    <property type="match status" value="1"/>
</dbReference>
<dbReference type="Pfam" id="PF11987">
    <property type="entry name" value="IF-2"/>
    <property type="match status" value="1"/>
</dbReference>
<dbReference type="Pfam" id="PF04760">
    <property type="entry name" value="IF2_N"/>
    <property type="match status" value="2"/>
</dbReference>
<dbReference type="SUPFAM" id="SSF52156">
    <property type="entry name" value="Initiation factor IF2/eIF5b, domain 3"/>
    <property type="match status" value="1"/>
</dbReference>
<dbReference type="SUPFAM" id="SSF52540">
    <property type="entry name" value="P-loop containing nucleoside triphosphate hydrolases"/>
    <property type="match status" value="1"/>
</dbReference>
<dbReference type="SUPFAM" id="SSF50447">
    <property type="entry name" value="Translation proteins"/>
    <property type="match status" value="2"/>
</dbReference>
<dbReference type="PROSITE" id="PS51722">
    <property type="entry name" value="G_TR_2"/>
    <property type="match status" value="1"/>
</dbReference>
<dbReference type="PROSITE" id="PS01176">
    <property type="entry name" value="IF2"/>
    <property type="match status" value="1"/>
</dbReference>
<sequence>MAKIRIHEIAKELGYDSKEIIEKANELGLGIKTASNAVEPEIAAAIYEYIQTREIPEAFKKNIKTPTAKKPKKENIKEQEKLNESEKKEPKKEEKLKQEVKKEELKIEKENAKEEEKQEIIDAHKPQSLASATLAKRRGLVIVKKKKDEEEIQVKKEEVKNSNDISINNEERLSLKTMFSNADESLKKKKKEKKSFVASKKESTEKMNFLDEHDFGDISLDDEDEVVLPDFSVKEQEKPQNINKKQPNFIRQAVGNSAGFGLEGGIQRRSRKKPSKKIEKKEVEEVGSVAISKEIRVYEFADKIGKSTSEVISKLFMLGMMTTKNDFLDEDAIEILAAEFGIEINIINEADEFDYVKDYEEETDEKDLVTRAPVITIMGHVDHGKTSLLDYIRKSRVASGEAGGITQHVGAYMVEKNGRKITFIDTPGHEAFTAMRARGASITDIVIIVVAADDGVKPQTKEAINHAKAAGVPIIIAINKMDKEAANPDMVKTQLAEMEIMPVEWGGSYEFVGVSAKTGMGIEDLLEIVLLQADILELKANPKSFAKASIIESSVQKGRGAAATIIVQNGTLTVGSTVVAGEAYGKVRAMSDDQGKALKEIKPGECGVIVGLSEVADAGEILIAVKTDKEAREYANKRHEYNRQKELSKSTKVSIDELGAKIKEGNLKALPVILKADVQGSLEALKASLEKLRNDEIKVNIIHSGVGGITQSDIELASASENSIVLGFNIRPTGEVKERSKDKGVEIKTYNVIYNLLDDVKALLGGMMSPIISEEQLGQAEIRQVINVPKIGQIAGCMVTEGVINRGAKIRLIRDGVVVYEGNVSSLKRFKDDAKEVAKGYECGVGIEGCDDMRVGDYIESYKEVEEQASL</sequence>
<organism>
    <name type="scientific">Campylobacter jejuni subsp. jejuni serotype O:23/36 (strain 81-176)</name>
    <dbReference type="NCBI Taxonomy" id="354242"/>
    <lineage>
        <taxon>Bacteria</taxon>
        <taxon>Pseudomonadati</taxon>
        <taxon>Campylobacterota</taxon>
        <taxon>Epsilonproteobacteria</taxon>
        <taxon>Campylobacterales</taxon>
        <taxon>Campylobacteraceae</taxon>
        <taxon>Campylobacter</taxon>
    </lineage>
</organism>
<name>IF2_CAMJJ</name>
<protein>
    <recommendedName>
        <fullName evidence="2">Translation initiation factor IF-2</fullName>
    </recommendedName>
</protein>
<feature type="chain" id="PRO_1000008223" description="Translation initiation factor IF-2">
    <location>
        <begin position="1"/>
        <end position="871"/>
    </location>
</feature>
<feature type="domain" description="tr-type G">
    <location>
        <begin position="370"/>
        <end position="537"/>
    </location>
</feature>
<feature type="region of interest" description="Disordered" evidence="3">
    <location>
        <begin position="60"/>
        <end position="101"/>
    </location>
</feature>
<feature type="region of interest" description="Disordered" evidence="3">
    <location>
        <begin position="184"/>
        <end position="203"/>
    </location>
</feature>
<feature type="region of interest" description="G1" evidence="1">
    <location>
        <begin position="379"/>
        <end position="386"/>
    </location>
</feature>
<feature type="region of interest" description="G2" evidence="1">
    <location>
        <begin position="404"/>
        <end position="408"/>
    </location>
</feature>
<feature type="region of interest" description="G3" evidence="1">
    <location>
        <begin position="425"/>
        <end position="428"/>
    </location>
</feature>
<feature type="region of interest" description="G4" evidence="1">
    <location>
        <begin position="479"/>
        <end position="482"/>
    </location>
</feature>
<feature type="region of interest" description="G5" evidence="1">
    <location>
        <begin position="515"/>
        <end position="517"/>
    </location>
</feature>
<feature type="compositionally biased region" description="Basic residues" evidence="3">
    <location>
        <begin position="61"/>
        <end position="72"/>
    </location>
</feature>
<feature type="compositionally biased region" description="Basic and acidic residues" evidence="3">
    <location>
        <begin position="73"/>
        <end position="101"/>
    </location>
</feature>
<feature type="binding site" evidence="2">
    <location>
        <begin position="379"/>
        <end position="386"/>
    </location>
    <ligand>
        <name>GTP</name>
        <dbReference type="ChEBI" id="CHEBI:37565"/>
    </ligand>
</feature>
<feature type="binding site" evidence="2">
    <location>
        <begin position="425"/>
        <end position="429"/>
    </location>
    <ligand>
        <name>GTP</name>
        <dbReference type="ChEBI" id="CHEBI:37565"/>
    </ligand>
</feature>
<feature type="binding site" evidence="2">
    <location>
        <begin position="479"/>
        <end position="482"/>
    </location>
    <ligand>
        <name>GTP</name>
        <dbReference type="ChEBI" id="CHEBI:37565"/>
    </ligand>
</feature>
<evidence type="ECO:0000250" key="1"/>
<evidence type="ECO:0000255" key="2">
    <source>
        <dbReference type="HAMAP-Rule" id="MF_00100"/>
    </source>
</evidence>
<evidence type="ECO:0000256" key="3">
    <source>
        <dbReference type="SAM" id="MobiDB-lite"/>
    </source>
</evidence>
<comment type="function">
    <text evidence="2">One of the essential components for the initiation of protein synthesis. Protects formylmethionyl-tRNA from spontaneous hydrolysis and promotes its binding to the 30S ribosomal subunits. Also involved in the hydrolysis of GTP during the formation of the 70S ribosomal complex.</text>
</comment>
<comment type="subcellular location">
    <subcellularLocation>
        <location evidence="2">Cytoplasm</location>
    </subcellularLocation>
</comment>
<comment type="similarity">
    <text evidence="2">Belongs to the TRAFAC class translation factor GTPase superfamily. Classic translation factor GTPase family. IF-2 subfamily.</text>
</comment>
<proteinExistence type="inferred from homology"/>
<gene>
    <name evidence="2" type="primary">infB</name>
    <name type="ordered locus">CJJ81176_0171</name>
</gene>
<reference key="1">
    <citation type="submission" date="2006-12" db="EMBL/GenBank/DDBJ databases">
        <authorList>
            <person name="Fouts D.E."/>
            <person name="Nelson K.E."/>
            <person name="Sebastian Y."/>
        </authorList>
    </citation>
    <scope>NUCLEOTIDE SEQUENCE [LARGE SCALE GENOMIC DNA]</scope>
    <source>
        <strain>81-176</strain>
    </source>
</reference>
<keyword id="KW-0963">Cytoplasm</keyword>
<keyword id="KW-0342">GTP-binding</keyword>
<keyword id="KW-0396">Initiation factor</keyword>
<keyword id="KW-0547">Nucleotide-binding</keyword>
<keyword id="KW-0648">Protein biosynthesis</keyword>
<accession>A1VXL9</accession>